<accession>P67902</accession>
<accession>O68928</accession>
<accession>P44378</accession>
<accession>Q9CL31</accession>
<organism>
    <name type="scientific">Pasteurella multocida (strain Pm70)</name>
    <dbReference type="NCBI Taxonomy" id="272843"/>
    <lineage>
        <taxon>Bacteria</taxon>
        <taxon>Pseudomonadati</taxon>
        <taxon>Pseudomonadota</taxon>
        <taxon>Gammaproteobacteria</taxon>
        <taxon>Pasteurellales</taxon>
        <taxon>Pasteurellaceae</taxon>
        <taxon>Pasteurella</taxon>
    </lineage>
</organism>
<gene>
    <name evidence="1" type="primary">rpsJ</name>
    <name evidence="1" type="synonym">rps10</name>
    <name type="ordered locus">PM1416</name>
</gene>
<comment type="function">
    <text evidence="1">Involved in the binding of tRNA to the ribosomes.</text>
</comment>
<comment type="subunit">
    <text evidence="1">Part of the 30S ribosomal subunit.</text>
</comment>
<comment type="similarity">
    <text evidence="1">Belongs to the universal ribosomal protein uS10 family.</text>
</comment>
<dbReference type="EMBL" id="AE004439">
    <property type="protein sequence ID" value="AAK03500.1"/>
    <property type="molecule type" value="Genomic_DNA"/>
</dbReference>
<dbReference type="RefSeq" id="WP_001181005.1">
    <property type="nucleotide sequence ID" value="NC_002663.1"/>
</dbReference>
<dbReference type="SMR" id="P67902"/>
<dbReference type="STRING" id="272843.PM1416"/>
<dbReference type="EnsemblBacteria" id="AAK03500">
    <property type="protein sequence ID" value="AAK03500"/>
    <property type="gene ID" value="PM1416"/>
</dbReference>
<dbReference type="GeneID" id="98390443"/>
<dbReference type="KEGG" id="pmu:PM1416"/>
<dbReference type="HOGENOM" id="CLU_122625_1_3_6"/>
<dbReference type="OrthoDB" id="9804464at2"/>
<dbReference type="Proteomes" id="UP000000809">
    <property type="component" value="Chromosome"/>
</dbReference>
<dbReference type="GO" id="GO:1990904">
    <property type="term" value="C:ribonucleoprotein complex"/>
    <property type="evidence" value="ECO:0007669"/>
    <property type="project" value="UniProtKB-KW"/>
</dbReference>
<dbReference type="GO" id="GO:0005840">
    <property type="term" value="C:ribosome"/>
    <property type="evidence" value="ECO:0007669"/>
    <property type="project" value="UniProtKB-KW"/>
</dbReference>
<dbReference type="GO" id="GO:0003735">
    <property type="term" value="F:structural constituent of ribosome"/>
    <property type="evidence" value="ECO:0007669"/>
    <property type="project" value="InterPro"/>
</dbReference>
<dbReference type="GO" id="GO:0000049">
    <property type="term" value="F:tRNA binding"/>
    <property type="evidence" value="ECO:0007669"/>
    <property type="project" value="UniProtKB-UniRule"/>
</dbReference>
<dbReference type="GO" id="GO:0006412">
    <property type="term" value="P:translation"/>
    <property type="evidence" value="ECO:0007669"/>
    <property type="project" value="UniProtKB-UniRule"/>
</dbReference>
<dbReference type="FunFam" id="3.30.70.600:FF:000001">
    <property type="entry name" value="30S ribosomal protein S10"/>
    <property type="match status" value="1"/>
</dbReference>
<dbReference type="Gene3D" id="3.30.70.600">
    <property type="entry name" value="Ribosomal protein S10 domain"/>
    <property type="match status" value="1"/>
</dbReference>
<dbReference type="HAMAP" id="MF_00508">
    <property type="entry name" value="Ribosomal_uS10"/>
    <property type="match status" value="1"/>
</dbReference>
<dbReference type="InterPro" id="IPR001848">
    <property type="entry name" value="Ribosomal_uS10"/>
</dbReference>
<dbReference type="InterPro" id="IPR018268">
    <property type="entry name" value="Ribosomal_uS10_CS"/>
</dbReference>
<dbReference type="InterPro" id="IPR027486">
    <property type="entry name" value="Ribosomal_uS10_dom"/>
</dbReference>
<dbReference type="InterPro" id="IPR036838">
    <property type="entry name" value="Ribosomal_uS10_dom_sf"/>
</dbReference>
<dbReference type="NCBIfam" id="NF001861">
    <property type="entry name" value="PRK00596.1"/>
    <property type="match status" value="1"/>
</dbReference>
<dbReference type="NCBIfam" id="TIGR01049">
    <property type="entry name" value="rpsJ_bact"/>
    <property type="match status" value="1"/>
</dbReference>
<dbReference type="PANTHER" id="PTHR11700">
    <property type="entry name" value="30S RIBOSOMAL PROTEIN S10 FAMILY MEMBER"/>
    <property type="match status" value="1"/>
</dbReference>
<dbReference type="Pfam" id="PF00338">
    <property type="entry name" value="Ribosomal_S10"/>
    <property type="match status" value="1"/>
</dbReference>
<dbReference type="PRINTS" id="PR00971">
    <property type="entry name" value="RIBOSOMALS10"/>
</dbReference>
<dbReference type="SMART" id="SM01403">
    <property type="entry name" value="Ribosomal_S10"/>
    <property type="match status" value="1"/>
</dbReference>
<dbReference type="SUPFAM" id="SSF54999">
    <property type="entry name" value="Ribosomal protein S10"/>
    <property type="match status" value="1"/>
</dbReference>
<dbReference type="PROSITE" id="PS00361">
    <property type="entry name" value="RIBOSOMAL_S10"/>
    <property type="match status" value="1"/>
</dbReference>
<name>RS10_PASMU</name>
<evidence type="ECO:0000255" key="1">
    <source>
        <dbReference type="HAMAP-Rule" id="MF_00508"/>
    </source>
</evidence>
<evidence type="ECO:0000305" key="2"/>
<keyword id="KW-1185">Reference proteome</keyword>
<keyword id="KW-0687">Ribonucleoprotein</keyword>
<keyword id="KW-0689">Ribosomal protein</keyword>
<sequence>MQNQRIRIRLKAFDHRLIDQSTAEIVETAKRTGAQVRGPIPLPTRKERFTVLISPHVNKDARDQYEIRTHKRLVDIVEPTEKTVDALMRLDLAAGVDVQISLG</sequence>
<proteinExistence type="inferred from homology"/>
<protein>
    <recommendedName>
        <fullName evidence="1">Small ribosomal subunit protein uS10</fullName>
    </recommendedName>
    <alternativeName>
        <fullName evidence="2">30S ribosomal protein S10</fullName>
    </alternativeName>
</protein>
<feature type="chain" id="PRO_0000146569" description="Small ribosomal subunit protein uS10">
    <location>
        <begin position="1"/>
        <end position="103"/>
    </location>
</feature>
<reference key="1">
    <citation type="journal article" date="2001" name="Proc. Natl. Acad. Sci. U.S.A.">
        <title>Complete genomic sequence of Pasteurella multocida Pm70.</title>
        <authorList>
            <person name="May B.J."/>
            <person name="Zhang Q."/>
            <person name="Li L.L."/>
            <person name="Paustian M.L."/>
            <person name="Whittam T.S."/>
            <person name="Kapur V."/>
        </authorList>
    </citation>
    <scope>NUCLEOTIDE SEQUENCE [LARGE SCALE GENOMIC DNA]</scope>
    <source>
        <strain>Pm70</strain>
    </source>
</reference>